<reference key="1">
    <citation type="journal article" date="2004" name="Development">
        <title>Dd-STATb, a Dictyostelium STAT protein with a highly aberrant SH2 domain, functions as a regulator of gene expression during growth and early development.</title>
        <authorList>
            <person name="Zhukovskaya N.V."/>
            <person name="Fukuzawa M."/>
            <person name="Tsujioka M."/>
            <person name="Jermyn K.A."/>
            <person name="Kawata T."/>
            <person name="Abe T."/>
            <person name="Zvelebil M."/>
            <person name="Williams J.G."/>
        </authorList>
    </citation>
    <scope>NUCLEOTIDE SEQUENCE [MRNA]</scope>
    <scope>FUNCTION</scope>
    <scope>SUBUNIT</scope>
    <scope>SUBCELLULAR LOCATION</scope>
    <scope>DEVELOPMENTAL STAGE</scope>
    <scope>LACK OF PHOSPHORYLATION</scope>
    <scope>MUTAGENESIS OF LEU-1026 AND TYR-1144</scope>
    <scope>DISRUPTION PHENOTYPE</scope>
    <source>
        <strain>AX2</strain>
    </source>
</reference>
<reference key="2">
    <citation type="journal article" date="2005" name="Nature">
        <title>The genome of the social amoeba Dictyostelium discoideum.</title>
        <authorList>
            <person name="Eichinger L."/>
            <person name="Pachebat J.A."/>
            <person name="Gloeckner G."/>
            <person name="Rajandream M.A."/>
            <person name="Sucgang R."/>
            <person name="Berriman M."/>
            <person name="Song J."/>
            <person name="Olsen R."/>
            <person name="Szafranski K."/>
            <person name="Xu Q."/>
            <person name="Tunggal B."/>
            <person name="Kummerfeld S."/>
            <person name="Madera M."/>
            <person name="Konfortov B.A."/>
            <person name="Rivero F."/>
            <person name="Bankier A.T."/>
            <person name="Lehmann R."/>
            <person name="Hamlin N."/>
            <person name="Davies R."/>
            <person name="Gaudet P."/>
            <person name="Fey P."/>
            <person name="Pilcher K."/>
            <person name="Chen G."/>
            <person name="Saunders D."/>
            <person name="Sodergren E.J."/>
            <person name="Davis P."/>
            <person name="Kerhornou A."/>
            <person name="Nie X."/>
            <person name="Hall N."/>
            <person name="Anjard C."/>
            <person name="Hemphill L."/>
            <person name="Bason N."/>
            <person name="Farbrother P."/>
            <person name="Desany B."/>
            <person name="Just E."/>
            <person name="Morio T."/>
            <person name="Rost R."/>
            <person name="Churcher C.M."/>
            <person name="Cooper J."/>
            <person name="Haydock S."/>
            <person name="van Driessche N."/>
            <person name="Cronin A."/>
            <person name="Goodhead I."/>
            <person name="Muzny D.M."/>
            <person name="Mourier T."/>
            <person name="Pain A."/>
            <person name="Lu M."/>
            <person name="Harper D."/>
            <person name="Lindsay R."/>
            <person name="Hauser H."/>
            <person name="James K.D."/>
            <person name="Quiles M."/>
            <person name="Madan Babu M."/>
            <person name="Saito T."/>
            <person name="Buchrieser C."/>
            <person name="Wardroper A."/>
            <person name="Felder M."/>
            <person name="Thangavelu M."/>
            <person name="Johnson D."/>
            <person name="Knights A."/>
            <person name="Loulseged H."/>
            <person name="Mungall K.L."/>
            <person name="Oliver K."/>
            <person name="Price C."/>
            <person name="Quail M.A."/>
            <person name="Urushihara H."/>
            <person name="Hernandez J."/>
            <person name="Rabbinowitsch E."/>
            <person name="Steffen D."/>
            <person name="Sanders M."/>
            <person name="Ma J."/>
            <person name="Kohara Y."/>
            <person name="Sharp S."/>
            <person name="Simmonds M.N."/>
            <person name="Spiegler S."/>
            <person name="Tivey A."/>
            <person name="Sugano S."/>
            <person name="White B."/>
            <person name="Walker D."/>
            <person name="Woodward J.R."/>
            <person name="Winckler T."/>
            <person name="Tanaka Y."/>
            <person name="Shaulsky G."/>
            <person name="Schleicher M."/>
            <person name="Weinstock G.M."/>
            <person name="Rosenthal A."/>
            <person name="Cox E.C."/>
            <person name="Chisholm R.L."/>
            <person name="Gibbs R.A."/>
            <person name="Loomis W.F."/>
            <person name="Platzer M."/>
            <person name="Kay R.R."/>
            <person name="Williams J.G."/>
            <person name="Dear P.H."/>
            <person name="Noegel A.A."/>
            <person name="Barrell B.G."/>
            <person name="Kuspa A."/>
        </authorList>
    </citation>
    <scope>NUCLEOTIDE SEQUENCE [LARGE SCALE GENOMIC DNA]</scope>
    <source>
        <strain>AX4</strain>
    </source>
</reference>
<accession>Q70GP4</accession>
<accession>Q55F36</accession>
<keyword id="KW-0238">DNA-binding</keyword>
<keyword id="KW-0539">Nucleus</keyword>
<keyword id="KW-1185">Reference proteome</keyword>
<keyword id="KW-0727">SH2 domain</keyword>
<keyword id="KW-0804">Transcription</keyword>
<keyword id="KW-0805">Transcription regulation</keyword>
<proteinExistence type="evidence at protein level"/>
<organism>
    <name type="scientific">Dictyostelium discoideum</name>
    <name type="common">Social amoeba</name>
    <dbReference type="NCBI Taxonomy" id="44689"/>
    <lineage>
        <taxon>Eukaryota</taxon>
        <taxon>Amoebozoa</taxon>
        <taxon>Evosea</taxon>
        <taxon>Eumycetozoa</taxon>
        <taxon>Dictyostelia</taxon>
        <taxon>Dictyosteliales</taxon>
        <taxon>Dictyosteliaceae</taxon>
        <taxon>Dictyostelium</taxon>
    </lineage>
</organism>
<sequence length="1148" mass="129275">MEVTNNGSNNSSTIASTNPPTSPSTTSTSKSLPPLSFLNSQWENKQSNNNNNSNNNNINNNNNNNNNNNNNNNNNNNNNNNSVKMEKLIELPSSSNNSPEFLNGVNNNNNGNNNNNNNNNNNNNNNNNNNNNNNNNNNNNNNNNNNNSGSGGNNSNNNSNISSPPSSSSTSTSVLSSSQSAYMNDKMVAATLDSIGKMESIQRKYEMQIESLMDQIQGYIEKEQKLRSQCQAVEDINAKLENENLQLKKELFEMSRKFKEIDIINLNNTNNNINNNNNNNNNNNNNNNNNSINNNNNNGFSPPPLVKYPSNGSLQQDAKRFKIMEQQSQQQQQMQQQQQIQQQKQYQQQQQQTTSKRKNNISIDGDKEALVAEALGSFVDYAKPSLKRSNSEEVFNSSVYKNKNNINNINNNSNSNNNNGNNSLLNDIQNWQQQQQQQQQLLHQRKKRKDYDYDYNSTQNGKGIPSNSSNNNSSNNNSNNNNNNNSNNNNNIIGSISPPHSSQLQQVSSPQQQQQQQKPNGLKLSISSGSIKDLINSPNKEQSSKSQYPSSLSQSSSIPDMDTDVDSTDEFDFGSNSNNNNNNNNNNNNNNNSNNSNNKKRNNSNNNNLGGDDDDSPDSNDRNGSSSPIDMEPSYDGANLFKTVTPGTITTPQEELLNEIHSLQMQQRETIEKMYIAQKQFLSDRSNGFNNNNEEILRSLQSDQTKLGSTLESELQALNQLYSQTILEPNQLCKLDILLQDVSIQLKQLHLYQMELNYGYGSNEPFPATLVIIKQPFPMVISKFKQLQEDHLCVQLLTGANVEIVSYSPIRAELVFHSKNLTKGSSNLGTQNSLKKNIEKDTQVLDPIKGVAKFPIKFLTGTRKSCVKLHFVLQIKTSDGHIINVPSSTSQPFIVITNDCQWEGSEGTLLKKETFNEKFEISWPHFVNILQKHFLKATKQSPIQPTRPLSMYDFTYLSNTFFGGKPFVSHKDFDSFWSWFGKSIQTLRYKRHISTLWQNGFIFMFLKRDVVTQILKNQDVGTFVILFSEAFPGQLEISYVGTDQKDSLSKSSNDLQSPTTTTTTTTSTRVKHYLVQANDTSGSKRTLPDFLSECNQFTHILQLNIAMIPQTETIPVFKREPKNVVLEPYYSKRQNSQNILGSGYDPLF</sequence>
<gene>
    <name type="primary">dstB</name>
    <name type="synonym">statB</name>
    <name type="ORF">DDB_G0268638</name>
</gene>
<comment type="function">
    <text evidence="3">Transcription factor that regulates gene expression during development. Required for optimal cell growth.</text>
</comment>
<comment type="subunit">
    <text evidence="3">Homodimer. Does not form heterodimers with other family members.</text>
</comment>
<comment type="subcellular location">
    <subcellularLocation>
        <location evidence="3">Nucleus</location>
    </subcellularLocation>
    <text>Predominantly nuclear in growing cells and throughout development.</text>
</comment>
<comment type="developmental stage">
    <text evidence="3">Detected at low levels in growing cells. Levels are higher during development and decrease again at culmination.</text>
</comment>
<comment type="disruption phenotype">
    <text evidence="3">Cells develop normally and show no evident defects. Still, these cells seem to be at a selective growth disadvantage.</text>
</comment>
<comment type="similarity">
    <text evidence="4">Belongs to the transcription factor STAT family.</text>
</comment>
<dbReference type="EMBL" id="AJ581661">
    <property type="protein sequence ID" value="CAE46396.1"/>
    <property type="molecule type" value="mRNA"/>
</dbReference>
<dbReference type="EMBL" id="AAFI02000004">
    <property type="protein sequence ID" value="EAL72908.1"/>
    <property type="molecule type" value="Genomic_DNA"/>
</dbReference>
<dbReference type="RefSeq" id="XP_646834.1">
    <property type="nucleotide sequence ID" value="XM_641742.1"/>
</dbReference>
<dbReference type="SMR" id="Q70GP4"/>
<dbReference type="FunCoup" id="Q70GP4">
    <property type="interactions" value="186"/>
</dbReference>
<dbReference type="STRING" id="44689.Q70GP4"/>
<dbReference type="GlyGen" id="Q70GP4">
    <property type="glycosylation" value="1 site"/>
</dbReference>
<dbReference type="PaxDb" id="44689-DDB0191116"/>
<dbReference type="ABCD" id="Q70GP4">
    <property type="antibodies" value="3 sequenced antibodies"/>
</dbReference>
<dbReference type="EnsemblProtists" id="EAL72908">
    <property type="protein sequence ID" value="EAL72908"/>
    <property type="gene ID" value="DDB_G0268638"/>
</dbReference>
<dbReference type="GeneID" id="8616516"/>
<dbReference type="KEGG" id="ddi:DDB_G0268638"/>
<dbReference type="dictyBase" id="DDB_G0268638">
    <property type="gene designation" value="dstB"/>
</dbReference>
<dbReference type="VEuPathDB" id="AmoebaDB:DDB_G0268638"/>
<dbReference type="HOGENOM" id="CLU_276871_0_0_1"/>
<dbReference type="InParanoid" id="Q70GP4"/>
<dbReference type="OMA" id="STLWQNG"/>
<dbReference type="Reactome" id="R-DDI-1059683">
    <property type="pathway name" value="Interleukin-6 signaling"/>
</dbReference>
<dbReference type="Reactome" id="R-DDI-1169408">
    <property type="pathway name" value="ISG15 antiviral mechanism"/>
</dbReference>
<dbReference type="Reactome" id="R-DDI-201556">
    <property type="pathway name" value="Signaling by ALK"/>
</dbReference>
<dbReference type="Reactome" id="R-DDI-3249367">
    <property type="pathway name" value="STAT6-mediated induction of chemokines"/>
</dbReference>
<dbReference type="Reactome" id="R-DDI-6783783">
    <property type="pathway name" value="Interleukin-10 signaling"/>
</dbReference>
<dbReference type="Reactome" id="R-DDI-6785807">
    <property type="pathway name" value="Interleukin-4 and Interleukin-13 signaling"/>
</dbReference>
<dbReference type="Reactome" id="R-DDI-877300">
    <property type="pathway name" value="Interferon gamma signaling"/>
</dbReference>
<dbReference type="Reactome" id="R-DDI-8854691">
    <property type="pathway name" value="Interleukin-20 family signaling"/>
</dbReference>
<dbReference type="Reactome" id="R-DDI-8983432">
    <property type="pathway name" value="Interleukin-15 signaling"/>
</dbReference>
<dbReference type="Reactome" id="R-DDI-8984722">
    <property type="pathway name" value="Interleukin-35 Signalling"/>
</dbReference>
<dbReference type="Reactome" id="R-DDI-8985947">
    <property type="pathway name" value="Interleukin-9 signaling"/>
</dbReference>
<dbReference type="Reactome" id="R-DDI-9008059">
    <property type="pathway name" value="Interleukin-37 signaling"/>
</dbReference>
<dbReference type="Reactome" id="R-DDI-9020591">
    <property type="pathway name" value="Interleukin-12 signaling"/>
</dbReference>
<dbReference type="Reactome" id="R-DDI-9020933">
    <property type="pathway name" value="Interleukin-23 signaling"/>
</dbReference>
<dbReference type="Reactome" id="R-DDI-9020956">
    <property type="pathway name" value="Interleukin-27 signaling"/>
</dbReference>
<dbReference type="Reactome" id="R-DDI-909733">
    <property type="pathway name" value="Interferon alpha/beta signaling"/>
</dbReference>
<dbReference type="Reactome" id="R-DDI-9701898">
    <property type="pathway name" value="STAT3 nuclear events downstream of ALK signaling"/>
</dbReference>
<dbReference type="Reactome" id="R-DDI-9860927">
    <property type="pathway name" value="Turbulent (oscillatory, disturbed) flow shear stress activates signaling by PIEZO1 and integrins in endothelial cells"/>
</dbReference>
<dbReference type="PRO" id="PR:Q70GP4"/>
<dbReference type="Proteomes" id="UP000002195">
    <property type="component" value="Chromosome 1"/>
</dbReference>
<dbReference type="GO" id="GO:0005737">
    <property type="term" value="C:cytoplasm"/>
    <property type="evidence" value="ECO:0000318"/>
    <property type="project" value="GO_Central"/>
</dbReference>
<dbReference type="GO" id="GO:0005634">
    <property type="term" value="C:nucleus"/>
    <property type="evidence" value="ECO:0000314"/>
    <property type="project" value="dictyBase"/>
</dbReference>
<dbReference type="GO" id="GO:0000981">
    <property type="term" value="F:DNA-binding transcription factor activity, RNA polymerase II-specific"/>
    <property type="evidence" value="ECO:0000318"/>
    <property type="project" value="GO_Central"/>
</dbReference>
<dbReference type="GO" id="GO:0042802">
    <property type="term" value="F:identical protein binding"/>
    <property type="evidence" value="ECO:0000353"/>
    <property type="project" value="dictyBase"/>
</dbReference>
<dbReference type="GO" id="GO:0000978">
    <property type="term" value="F:RNA polymerase II cis-regulatory region sequence-specific DNA binding"/>
    <property type="evidence" value="ECO:0000318"/>
    <property type="project" value="GO_Central"/>
</dbReference>
<dbReference type="GO" id="GO:0007259">
    <property type="term" value="P:cell surface receptor signaling pathway via JAK-STAT"/>
    <property type="evidence" value="ECO:0000318"/>
    <property type="project" value="GO_Central"/>
</dbReference>
<dbReference type="GO" id="GO:0006952">
    <property type="term" value="P:defense response"/>
    <property type="evidence" value="ECO:0000318"/>
    <property type="project" value="GO_Central"/>
</dbReference>
<dbReference type="GO" id="GO:0045892">
    <property type="term" value="P:negative regulation of DNA-templated transcription"/>
    <property type="evidence" value="ECO:0000315"/>
    <property type="project" value="dictyBase"/>
</dbReference>
<dbReference type="GO" id="GO:0045893">
    <property type="term" value="P:positive regulation of DNA-templated transcription"/>
    <property type="evidence" value="ECO:0000315"/>
    <property type="project" value="dictyBase"/>
</dbReference>
<dbReference type="GO" id="GO:0042127">
    <property type="term" value="P:regulation of cell population proliferation"/>
    <property type="evidence" value="ECO:0000315"/>
    <property type="project" value="dictyBase"/>
</dbReference>
<dbReference type="GO" id="GO:0006357">
    <property type="term" value="P:regulation of transcription by RNA polymerase II"/>
    <property type="evidence" value="ECO:0000318"/>
    <property type="project" value="GO_Central"/>
</dbReference>
<dbReference type="CDD" id="cd09919">
    <property type="entry name" value="SH2_STAT_family"/>
    <property type="match status" value="1"/>
</dbReference>
<dbReference type="FunFam" id="1.10.238.10:FF:000446">
    <property type="entry name" value="Signal transducer and activator of transcription"/>
    <property type="match status" value="1"/>
</dbReference>
<dbReference type="FunFam" id="2.60.40.340:FF:000007">
    <property type="entry name" value="Signal transducer and activator of transcription"/>
    <property type="match status" value="1"/>
</dbReference>
<dbReference type="FunFam" id="3.30.505.10:FF:000099">
    <property type="entry name" value="Signal transducer and activator of transcription"/>
    <property type="match status" value="1"/>
</dbReference>
<dbReference type="Gene3D" id="1.10.238.10">
    <property type="entry name" value="EF-hand"/>
    <property type="match status" value="1"/>
</dbReference>
<dbReference type="Gene3D" id="2.60.40.340">
    <property type="entry name" value="Rel homology domain (RHD), DNA-binding domain"/>
    <property type="match status" value="1"/>
</dbReference>
<dbReference type="Gene3D" id="3.30.505.10">
    <property type="entry name" value="SH2 domain"/>
    <property type="match status" value="1"/>
</dbReference>
<dbReference type="Gene3D" id="1.20.58.240">
    <property type="entry name" value="STAT, domain 1"/>
    <property type="match status" value="1"/>
</dbReference>
<dbReference type="InterPro" id="IPR041604">
    <property type="entry name" value="EF-hand_12"/>
</dbReference>
<dbReference type="InterPro" id="IPR008967">
    <property type="entry name" value="p53-like_TF_DNA-bd_sf"/>
</dbReference>
<dbReference type="InterPro" id="IPR037059">
    <property type="entry name" value="RHD_DNA_bind_dom_sf"/>
</dbReference>
<dbReference type="InterPro" id="IPR000980">
    <property type="entry name" value="SH2"/>
</dbReference>
<dbReference type="InterPro" id="IPR036860">
    <property type="entry name" value="SH2_dom_sf"/>
</dbReference>
<dbReference type="InterPro" id="IPR001217">
    <property type="entry name" value="STAT"/>
</dbReference>
<dbReference type="InterPro" id="IPR015988">
    <property type="entry name" value="STAT_TF_coiled-coil"/>
</dbReference>
<dbReference type="InterPro" id="IPR015347">
    <property type="entry name" value="STAT_TF_homologue_coiled-coil"/>
</dbReference>
<dbReference type="InterPro" id="IPR041410">
    <property type="entry name" value="STATa_Ig"/>
</dbReference>
<dbReference type="PANTHER" id="PTHR11801">
    <property type="entry name" value="SIGNAL TRANSDUCER AND ACTIVATOR OF TRANSCRIPTION"/>
    <property type="match status" value="1"/>
</dbReference>
<dbReference type="Pfam" id="PF09267">
    <property type="entry name" value="Dict-STAT-coil"/>
    <property type="match status" value="1"/>
</dbReference>
<dbReference type="Pfam" id="PF17901">
    <property type="entry name" value="EF-hand_12"/>
    <property type="match status" value="1"/>
</dbReference>
<dbReference type="Pfam" id="PF18214">
    <property type="entry name" value="STATa_Ig"/>
    <property type="match status" value="1"/>
</dbReference>
<dbReference type="SUPFAM" id="SSF49417">
    <property type="entry name" value="p53-like transcription factors"/>
    <property type="match status" value="1"/>
</dbReference>
<dbReference type="SUPFAM" id="SSF55550">
    <property type="entry name" value="SH2 domain"/>
    <property type="match status" value="1"/>
</dbReference>
<dbReference type="SUPFAM" id="SSF47655">
    <property type="entry name" value="STAT"/>
    <property type="match status" value="1"/>
</dbReference>
<dbReference type="PROSITE" id="PS50001">
    <property type="entry name" value="SH2"/>
    <property type="match status" value="1"/>
</dbReference>
<protein>
    <recommendedName>
        <fullName>Signal transducer and activator of transcription B</fullName>
    </recommendedName>
    <alternativeName>
        <fullName>Dd-STATb</fullName>
    </alternativeName>
    <alternativeName>
        <fullName>STAT5 homolog B</fullName>
    </alternativeName>
</protein>
<feature type="chain" id="PRO_0000328286" description="Signal transducer and activator of transcription B">
    <location>
        <begin position="1"/>
        <end position="1148"/>
    </location>
</feature>
<feature type="domain" description="SH2" evidence="1">
    <location>
        <begin position="997"/>
        <end position="1122"/>
    </location>
</feature>
<feature type="region of interest" description="Disordered" evidence="2">
    <location>
        <begin position="1"/>
        <end position="81"/>
    </location>
</feature>
<feature type="region of interest" description="Disordered" evidence="2">
    <location>
        <begin position="93"/>
        <end position="178"/>
    </location>
</feature>
<feature type="region of interest" description="Disordered" evidence="2">
    <location>
        <begin position="268"/>
        <end position="312"/>
    </location>
</feature>
<feature type="region of interest" description="Disordered" evidence="2">
    <location>
        <begin position="403"/>
        <end position="425"/>
    </location>
</feature>
<feature type="region of interest" description="Disordered" evidence="2">
    <location>
        <begin position="453"/>
        <end position="645"/>
    </location>
</feature>
<feature type="compositionally biased region" description="Low complexity" evidence="2">
    <location>
        <begin position="1"/>
        <end position="36"/>
    </location>
</feature>
<feature type="compositionally biased region" description="Polar residues" evidence="2">
    <location>
        <begin position="37"/>
        <end position="47"/>
    </location>
</feature>
<feature type="compositionally biased region" description="Low complexity" evidence="2">
    <location>
        <begin position="48"/>
        <end position="81"/>
    </location>
</feature>
<feature type="compositionally biased region" description="Low complexity" evidence="2">
    <location>
        <begin position="106"/>
        <end position="178"/>
    </location>
</feature>
<feature type="compositionally biased region" description="Low complexity" evidence="2">
    <location>
        <begin position="268"/>
        <end position="298"/>
    </location>
</feature>
<feature type="compositionally biased region" description="Low complexity" evidence="2">
    <location>
        <begin position="466"/>
        <end position="517"/>
    </location>
</feature>
<feature type="compositionally biased region" description="Polar residues" evidence="2">
    <location>
        <begin position="525"/>
        <end position="541"/>
    </location>
</feature>
<feature type="compositionally biased region" description="Low complexity" evidence="2">
    <location>
        <begin position="544"/>
        <end position="557"/>
    </location>
</feature>
<feature type="compositionally biased region" description="Acidic residues" evidence="2">
    <location>
        <begin position="561"/>
        <end position="572"/>
    </location>
</feature>
<feature type="compositionally biased region" description="Low complexity" evidence="2">
    <location>
        <begin position="574"/>
        <end position="610"/>
    </location>
</feature>
<feature type="mutagenesis site" description="No effect on dimerization and on nuclear location." evidence="3">
    <original>L</original>
    <variation>R</variation>
    <location>
        <position position="1026"/>
    </location>
</feature>
<feature type="mutagenesis site" description="No effect on dimerization and on nuclear location." evidence="3">
    <original>Y</original>
    <variation>F</variation>
    <location>
        <position position="1144"/>
    </location>
</feature>
<evidence type="ECO:0000255" key="1">
    <source>
        <dbReference type="PROSITE-ProRule" id="PRU00191"/>
    </source>
</evidence>
<evidence type="ECO:0000256" key="2">
    <source>
        <dbReference type="SAM" id="MobiDB-lite"/>
    </source>
</evidence>
<evidence type="ECO:0000269" key="3">
    <source>
    </source>
</evidence>
<evidence type="ECO:0000305" key="4"/>
<name>STATB_DICDI</name>